<reference key="1">
    <citation type="journal article" date="2011" name="Nature">
        <title>A high-resolution map of human evolutionary constraint using 29 mammals.</title>
        <authorList>
            <person name="Lindblad-Toh K."/>
            <person name="Garber M."/>
            <person name="Zuk O."/>
            <person name="Lin M.F."/>
            <person name="Parker B.J."/>
            <person name="Washietl S."/>
            <person name="Kheradpour P."/>
            <person name="Ernst J."/>
            <person name="Jordan G."/>
            <person name="Mauceli E."/>
            <person name="Ward L.D."/>
            <person name="Lowe C.B."/>
            <person name="Holloway A.K."/>
            <person name="Clamp M."/>
            <person name="Gnerre S."/>
            <person name="Alfoldi J."/>
            <person name="Beal K."/>
            <person name="Chang J."/>
            <person name="Clawson H."/>
            <person name="Cuff J."/>
            <person name="Di Palma F."/>
            <person name="Fitzgerald S."/>
            <person name="Flicek P."/>
            <person name="Guttman M."/>
            <person name="Hubisz M.J."/>
            <person name="Jaffe D.B."/>
            <person name="Jungreis I."/>
            <person name="Kent W.J."/>
            <person name="Kostka D."/>
            <person name="Lara M."/>
            <person name="Martins A.L."/>
            <person name="Massingham T."/>
            <person name="Moltke I."/>
            <person name="Raney B.J."/>
            <person name="Rasmussen M.D."/>
            <person name="Robinson J."/>
            <person name="Stark A."/>
            <person name="Vilella A.J."/>
            <person name="Wen J."/>
            <person name="Xie X."/>
            <person name="Zody M.C."/>
            <person name="Baldwin J."/>
            <person name="Bloom T."/>
            <person name="Chin C.W."/>
            <person name="Heiman D."/>
            <person name="Nicol R."/>
            <person name="Nusbaum C."/>
            <person name="Young S."/>
            <person name="Wilkinson J."/>
            <person name="Worley K.C."/>
            <person name="Kovar C.L."/>
            <person name="Muzny D.M."/>
            <person name="Gibbs R.A."/>
            <person name="Cree A."/>
            <person name="Dihn H.H."/>
            <person name="Fowler G."/>
            <person name="Jhangiani S."/>
            <person name="Joshi V."/>
            <person name="Lee S."/>
            <person name="Lewis L.R."/>
            <person name="Nazareth L.V."/>
            <person name="Okwuonu G."/>
            <person name="Santibanez J."/>
            <person name="Warren W.C."/>
            <person name="Mardis E.R."/>
            <person name="Weinstock G.M."/>
            <person name="Wilson R.K."/>
            <person name="Delehaunty K."/>
            <person name="Dooling D."/>
            <person name="Fronik C."/>
            <person name="Fulton L."/>
            <person name="Fulton B."/>
            <person name="Graves T."/>
            <person name="Minx P."/>
            <person name="Sodergren E."/>
            <person name="Birney E."/>
            <person name="Margulies E.H."/>
            <person name="Herrero J."/>
            <person name="Green E.D."/>
            <person name="Haussler D."/>
            <person name="Siepel A."/>
            <person name="Goldman N."/>
            <person name="Pollard K.S."/>
            <person name="Pedersen J.S."/>
            <person name="Lander E.S."/>
            <person name="Kellis M."/>
        </authorList>
    </citation>
    <scope>NUCLEOTIDE SEQUENCE [LARGE SCALE GENOMIC DNA]</scope>
    <source>
        <strain>Thorbecke</strain>
    </source>
</reference>
<reference evidence="18 19" key="2">
    <citation type="journal article" date="2015" name="Nature">
        <title>Structural basis for stop codon recognition in eukaryotes.</title>
        <authorList>
            <person name="Brown A."/>
            <person name="Shao S."/>
            <person name="Murray J."/>
            <person name="Hegde R.S."/>
            <person name="Ramakrishnan V."/>
        </authorList>
    </citation>
    <scope>STRUCTURE BY ELECTRON MICROSCOPY (3.45 ANGSTROMS) OF 2-204 OF RIBOSOME</scope>
    <scope>FUNCTION</scope>
    <scope>SUBCELLULAR LOCATION</scope>
    <scope>SUBUNIT</scope>
</reference>
<reference evidence="20 21" key="3">
    <citation type="journal article" date="2016" name="Cell">
        <title>Decoding mammalian ribosome-mRNA states by translational GTPase complexes.</title>
        <authorList>
            <person name="Shao S."/>
            <person name="Murray J."/>
            <person name="Brown A."/>
            <person name="Taunton J."/>
            <person name="Ramakrishnan V."/>
            <person name="Hegde R.S."/>
        </authorList>
    </citation>
    <scope>STRUCTURE BY ELECTRON MICROSCOPY (3.31 ANGSTROMS) OF RIBOSOME</scope>
    <scope>FUNCTION</scope>
    <scope>SUBCELLULAR LOCATION</scope>
    <scope>SUBUNIT</scope>
</reference>
<reference evidence="24" key="4">
    <citation type="journal article" date="2018" name="Cell Rep.">
        <title>tRNA translocation by the eukaryotic 80S ribosome and the impact of GTP hydrolysis.</title>
        <authorList>
            <person name="Flis J."/>
            <person name="Holm M."/>
            <person name="Rundlet E.J."/>
            <person name="Loerke J."/>
            <person name="Hilal T."/>
            <person name="Dabrowski M."/>
            <person name="Burger J."/>
            <person name="Mielke T."/>
            <person name="Blanchard S.C."/>
            <person name="Spahn C.M.T."/>
            <person name="Budkevich T.V."/>
        </authorList>
    </citation>
    <scope>STRUCTURE BY ELECTRON MICROSCOPY (3.60 ANGSTROMS) OF 2-204 OF RIBOSOME</scope>
    <scope>FUNCTION</scope>
    <scope>SUBCELLULAR LOCATION</scope>
    <scope>SUBUNIT</scope>
</reference>
<reference evidence="22 23" key="5">
    <citation type="journal article" date="2018" name="Elife">
        <title>Dual tRNA mimicry in the Cricket paralysis virus IRES uncovers an unexpected similarity with the Hepatitis C Virus IRES.</title>
        <authorList>
            <person name="Pisareva V.P."/>
            <person name="Pisarev A.V."/>
            <person name="Fernandez I.S."/>
        </authorList>
    </citation>
    <scope>STRUCTURE BY ELECTRON MICROSCOPY (3.20 ANGSTROMS) OF RIBOSOME</scope>
    <scope>SUBCELLULAR LOCATION</scope>
    <scope>SUBUNIT</scope>
</reference>
<reference evidence="27 28" key="6">
    <citation type="journal article" date="2018" name="Elife">
        <title>Structures of translationally inactive mammalian ribosomes.</title>
        <authorList>
            <person name="Brown A."/>
            <person name="Baird M.R."/>
            <person name="Yip M.C."/>
            <person name="Murray J."/>
            <person name="Shao S."/>
        </authorList>
    </citation>
    <scope>STRUCTURE BY ELECTRON MICROSCOPY (3.30 ANGSTROMS) OF 2-204 OF RIBOSOME</scope>
    <scope>SUBCELLULAR LOCATION</scope>
    <scope>SUBUNIT</scope>
</reference>
<reference evidence="25 26" key="7">
    <citation type="journal article" date="2018" name="Mol. Cell">
        <title>ZNF598 is a quality control sensor of collided ribosomes.</title>
        <authorList>
            <person name="Juszkiewicz S."/>
            <person name="Chandrasekaran V."/>
            <person name="Lin Z."/>
            <person name="Kraatz S."/>
            <person name="Ramakrishnan V."/>
            <person name="Hegde R.S."/>
        </authorList>
    </citation>
    <scope>STRUCTURE BY ELECTRON MICROSCOPY (3.80 ANGSTROMS) OF RIBOSOME</scope>
    <scope>SUBCELLULAR LOCATION</scope>
    <scope>SUBUNIT</scope>
</reference>
<reference evidence="31 32" key="8">
    <citation type="journal article" date="2019" name="Elife">
        <title>Structural and mutational analysis of the ribosome-arresting human XBP1u.</title>
        <authorList>
            <person name="Shanmuganathan V."/>
            <person name="Schiller N."/>
            <person name="Magoulopoulou A."/>
            <person name="Cheng J."/>
            <person name="Braunger K."/>
            <person name="Cymer F."/>
            <person name="Berninghausen O."/>
            <person name="Beatrix B."/>
            <person name="Kohno K."/>
            <person name="von Heijne G."/>
            <person name="Beckmann R."/>
        </authorList>
    </citation>
    <scope>STRUCTURE BY ELECTRON MICROSCOPY (3.00 ANGSTROMS) OF 2-204 OF RIBOSOME</scope>
    <scope>SUBCELLULAR LOCATION</scope>
    <scope>SUBUNIT</scope>
</reference>
<reference evidence="29 30" key="9">
    <citation type="journal article" date="2019" name="EMBO J.">
        <title>The Israeli acute paralysis virus IRES captures host ribosomes by mimicking a ribosomal state with hybrid tRNAs.</title>
        <authorList>
            <person name="Acosta-Reyes F."/>
            <person name="Neupane R."/>
            <person name="Frank J."/>
            <person name="Fernandez I.S."/>
        </authorList>
    </citation>
    <scope>STRUCTURE BY ELECTRON MICROSCOPY (3.10 ANGSTROMS) OF RIBOSOME</scope>
    <scope>SUBCELLULAR LOCATION</scope>
    <scope>SUBUNIT</scope>
</reference>
<reference evidence="33" key="10">
    <citation type="journal article" date="2019" name="Nat. Struct. Mol. Biol.">
        <title>Mechanism of ribosome stalling during translation of a poly(A) tail.</title>
        <authorList>
            <person name="Chandrasekaran V."/>
            <person name="Juszkiewicz S."/>
            <person name="Choi J."/>
            <person name="Puglisi J.D."/>
            <person name="Brown A."/>
            <person name="Shao S."/>
            <person name="Ramakrishnan V."/>
            <person name="Hegde R.S."/>
        </authorList>
    </citation>
    <scope>STRUCTURE BY ELECTRON MICROSCOPY (2.80 ANGSTROMS) OF RIBOSOME</scope>
    <scope>SUBCELLULAR LOCATION</scope>
    <scope>SUBUNIT</scope>
</reference>
<reference evidence="34 35" key="11">
    <citation type="journal article" date="2020" name="Cell Rep.">
        <title>The Halastavi arva virus intergenic region IRES promotes translation by the simplest possible initiation mechanism.</title>
        <authorList>
            <person name="Abaeva I.S."/>
            <person name="Vicens Q."/>
            <person name="Bochler A."/>
            <person name="Soufari H."/>
            <person name="Simonetti A."/>
            <person name="Pestova T.V."/>
            <person name="Hashem Y."/>
            <person name="Hellen C.U.T."/>
        </authorList>
    </citation>
    <scope>STRUCTURE BY ELECTRON MICROSCOPY (3.49 ANGSTROMS) OF 2-204 OF RIBOSOME</scope>
    <scope>SUBCELLULAR LOCATION</scope>
    <scope>SUBUNIT</scope>
</reference>
<reference evidence="37 38" key="12">
    <citation type="journal article" date="2022" name="Mol. Cell">
        <title>Direct epitranscriptomic regulation of mammalian translation initiation through N4-acetylcytidine.</title>
        <authorList>
            <person name="Arango D."/>
            <person name="Sturgill D."/>
            <person name="Yang R."/>
            <person name="Kanai T."/>
            <person name="Bauer P."/>
            <person name="Roy J."/>
            <person name="Wang Z."/>
            <person name="Hosogane M."/>
            <person name="Schiffers S."/>
            <person name="Oberdoerffer S."/>
        </authorList>
    </citation>
    <scope>STRUCTURE BY ELECTRON MICROSCOPY (2.80 ANGSTROMS) OF 2-204 OF RIBOSOME</scope>
    <scope>SUBCELLULAR LOCATION</scope>
    <scope>SUBUNIT</scope>
</reference>
<reference evidence="39 40" key="13">
    <citation type="journal article" date="2022" name="Science">
        <title>Structure of the mammalian ribosome as it decodes the selenocysteine UGA codon.</title>
        <authorList>
            <person name="Hilal T."/>
            <person name="Killam B.Y."/>
            <person name="Grozdanovic M."/>
            <person name="Dobosz-Bartoszek M."/>
            <person name="Loerke J."/>
            <person name="Buerger J."/>
            <person name="Mielke T."/>
            <person name="Copeland P.R."/>
            <person name="Simonovic M."/>
            <person name="Spahn C.M.T."/>
        </authorList>
    </citation>
    <scope>STRUCTURE BY ELECTRON MICROSCOPY (2.80 ANGSTROMS) OF RIBOSOME</scope>
    <scope>SUBCELLULAR LOCATION</scope>
    <scope>SUBUNIT</scope>
</reference>
<reference evidence="36" key="14">
    <citation type="journal article" date="2023" name="Nature">
        <title>A molecular network of conserved factors keeps ribosomes dormant in the egg.</title>
        <authorList>
            <person name="Leesch F."/>
            <person name="Lorenzo-Orts L."/>
            <person name="Pribitzer C."/>
            <person name="Grishkovskaya I."/>
            <person name="Roehsner J."/>
            <person name="Chugunova A."/>
            <person name="Matzinger M."/>
            <person name="Roitinger E."/>
            <person name="Belacic K."/>
            <person name="Kandolf S."/>
            <person name="Lin T.Y."/>
            <person name="Mechtler K."/>
            <person name="Meinhart A."/>
            <person name="Haselbach D."/>
            <person name="Pauli A."/>
        </authorList>
    </citation>
    <scope>STRUCTURE BY ELECTRON MICROSCOPY (2.30 ANGSTROMS) OF RIBOSOME</scope>
    <scope>SUBCELLULAR LOCATION</scope>
    <scope>SUBUNIT</scope>
</reference>
<protein>
    <recommendedName>
        <fullName>Large ribosomal subunit protein eL15</fullName>
    </recommendedName>
    <alternativeName>
        <fullName>60S ribosomal protein L15</fullName>
    </alternativeName>
</protein>
<organism>
    <name type="scientific">Oryctolagus cuniculus</name>
    <name type="common">Rabbit</name>
    <dbReference type="NCBI Taxonomy" id="9986"/>
    <lineage>
        <taxon>Eukaryota</taxon>
        <taxon>Metazoa</taxon>
        <taxon>Chordata</taxon>
        <taxon>Craniata</taxon>
        <taxon>Vertebrata</taxon>
        <taxon>Euteleostomi</taxon>
        <taxon>Mammalia</taxon>
        <taxon>Eutheria</taxon>
        <taxon>Euarchontoglires</taxon>
        <taxon>Glires</taxon>
        <taxon>Lagomorpha</taxon>
        <taxon>Leporidae</taxon>
        <taxon>Oryctolagus</taxon>
    </lineage>
</organism>
<comment type="function">
    <text evidence="4 5 9">Component of the large ribosomal subunit (PubMed:26245381, PubMed:27863242, PubMed:30517857). The ribosome is a large ribonucleoprotein complex responsible for the synthesis of proteins in the cell (PubMed:26245381, PubMed:27863242, PubMed:30517857).</text>
</comment>
<comment type="subunit">
    <text evidence="1 4 5 6 7 8 9 10 11 12 13 14 15 16">Component of the large ribosomal subunit (PubMed:26245381, PubMed:27863242, PubMed:29856316, PubMed:30293783, PubMed:30355441, PubMed:30517857, PubMed:31246176, PubMed:31609474, PubMed:31768042, PubMed:33296660, PubMed:35679869, PubMed:35709277, PubMed:36653451). Interacts with IFIT1 (via TPR repeats 1-4) (By similarity).</text>
</comment>
<comment type="subcellular location">
    <subcellularLocation>
        <location evidence="4 5 6 7 8 9 10 11 12 13 14 15 16">Cytoplasm</location>
    </subcellularLocation>
</comment>
<comment type="similarity">
    <text evidence="17">Belongs to the eukaryotic ribosomal protein eL15 family.</text>
</comment>
<dbReference type="EMBL" id="AAGW02047970">
    <property type="status" value="NOT_ANNOTATED_CDS"/>
    <property type="molecule type" value="Genomic_DNA"/>
</dbReference>
<dbReference type="RefSeq" id="XP_002716262.1">
    <property type="nucleotide sequence ID" value="XM_002716216.5"/>
</dbReference>
<dbReference type="RefSeq" id="XP_069928963.1">
    <property type="nucleotide sequence ID" value="XM_070072862.1"/>
</dbReference>
<dbReference type="PDB" id="3JAG">
    <property type="method" value="EM"/>
    <property type="resolution" value="3.65 A"/>
    <property type="chains" value="N=2-204"/>
</dbReference>
<dbReference type="PDB" id="3JAH">
    <property type="method" value="EM"/>
    <property type="resolution" value="3.45 A"/>
    <property type="chains" value="N=2-204"/>
</dbReference>
<dbReference type="PDB" id="3JAI">
    <property type="method" value="EM"/>
    <property type="resolution" value="3.65 A"/>
    <property type="chains" value="N=2-204"/>
</dbReference>
<dbReference type="PDB" id="5LZS">
    <property type="method" value="EM"/>
    <property type="resolution" value="3.31 A"/>
    <property type="chains" value="N=1-204"/>
</dbReference>
<dbReference type="PDB" id="5LZT">
    <property type="method" value="EM"/>
    <property type="resolution" value="3.65 A"/>
    <property type="chains" value="N=1-204"/>
</dbReference>
<dbReference type="PDB" id="5LZU">
    <property type="method" value="EM"/>
    <property type="resolution" value="3.75 A"/>
    <property type="chains" value="N=1-204"/>
</dbReference>
<dbReference type="PDB" id="5LZV">
    <property type="method" value="EM"/>
    <property type="resolution" value="3.35 A"/>
    <property type="chains" value="N=1-204"/>
</dbReference>
<dbReference type="PDB" id="5LZW">
    <property type="method" value="EM"/>
    <property type="resolution" value="3.53 A"/>
    <property type="chains" value="N=1-204"/>
</dbReference>
<dbReference type="PDB" id="5LZX">
    <property type="method" value="EM"/>
    <property type="resolution" value="3.67 A"/>
    <property type="chains" value="N=1-204"/>
</dbReference>
<dbReference type="PDB" id="5LZY">
    <property type="method" value="EM"/>
    <property type="resolution" value="3.99 A"/>
    <property type="chains" value="N=1-204"/>
</dbReference>
<dbReference type="PDB" id="6D90">
    <property type="method" value="EM"/>
    <property type="resolution" value="3.20 A"/>
    <property type="chains" value="N=1-204"/>
</dbReference>
<dbReference type="PDB" id="6D9J">
    <property type="method" value="EM"/>
    <property type="resolution" value="3.20 A"/>
    <property type="chains" value="N=1-204"/>
</dbReference>
<dbReference type="PDB" id="6FTG">
    <property type="method" value="EM"/>
    <property type="resolution" value="9.10 A"/>
    <property type="chains" value="N=2-204"/>
</dbReference>
<dbReference type="PDB" id="6FTI">
    <property type="method" value="EM"/>
    <property type="resolution" value="4.20 A"/>
    <property type="chains" value="N=2-204"/>
</dbReference>
<dbReference type="PDB" id="6FTJ">
    <property type="method" value="EM"/>
    <property type="resolution" value="4.70 A"/>
    <property type="chains" value="N=2-204"/>
</dbReference>
<dbReference type="PDB" id="6GZ3">
    <property type="method" value="EM"/>
    <property type="resolution" value="3.60 A"/>
    <property type="chains" value="AN=2-204"/>
</dbReference>
<dbReference type="PDB" id="6HCF">
    <property type="method" value="EM"/>
    <property type="resolution" value="3.90 A"/>
    <property type="chains" value="N3=1-204"/>
</dbReference>
<dbReference type="PDB" id="6HCJ">
    <property type="method" value="EM"/>
    <property type="resolution" value="3.80 A"/>
    <property type="chains" value="N3=1-204"/>
</dbReference>
<dbReference type="PDB" id="6HCM">
    <property type="method" value="EM"/>
    <property type="resolution" value="6.80 A"/>
    <property type="chains" value="N3=1-204"/>
</dbReference>
<dbReference type="PDB" id="6HCQ">
    <property type="method" value="EM"/>
    <property type="resolution" value="6.50 A"/>
    <property type="chains" value="N3=1-204"/>
</dbReference>
<dbReference type="PDB" id="6MTB">
    <property type="method" value="EM"/>
    <property type="resolution" value="3.60 A"/>
    <property type="chains" value="N=2-204"/>
</dbReference>
<dbReference type="PDB" id="6MTC">
    <property type="method" value="EM"/>
    <property type="resolution" value="3.40 A"/>
    <property type="chains" value="N=2-204"/>
</dbReference>
<dbReference type="PDB" id="6MTD">
    <property type="method" value="EM"/>
    <property type="resolution" value="3.30 A"/>
    <property type="chains" value="N=2-204"/>
</dbReference>
<dbReference type="PDB" id="6MTE">
    <property type="method" value="EM"/>
    <property type="resolution" value="3.40 A"/>
    <property type="chains" value="N=2-204"/>
</dbReference>
<dbReference type="PDB" id="6P5I">
    <property type="method" value="EM"/>
    <property type="resolution" value="3.10 A"/>
    <property type="chains" value="AN=1-204"/>
</dbReference>
<dbReference type="PDB" id="6P5J">
    <property type="method" value="EM"/>
    <property type="resolution" value="3.10 A"/>
    <property type="chains" value="AN=1-204"/>
</dbReference>
<dbReference type="PDB" id="6P5K">
    <property type="method" value="EM"/>
    <property type="resolution" value="3.10 A"/>
    <property type="chains" value="AN=1-204"/>
</dbReference>
<dbReference type="PDB" id="6P5N">
    <property type="method" value="EM"/>
    <property type="resolution" value="3.20 A"/>
    <property type="chains" value="AN=1-204"/>
</dbReference>
<dbReference type="PDB" id="6R5Q">
    <property type="method" value="EM"/>
    <property type="resolution" value="3.00 A"/>
    <property type="chains" value="N=2-204"/>
</dbReference>
<dbReference type="PDB" id="6R6G">
    <property type="method" value="EM"/>
    <property type="resolution" value="3.70 A"/>
    <property type="chains" value="N=2-204"/>
</dbReference>
<dbReference type="PDB" id="6R6P">
    <property type="method" value="EM"/>
    <property type="resolution" value="3.10 A"/>
    <property type="chains" value="N=2-204"/>
</dbReference>
<dbReference type="PDB" id="6R7Q">
    <property type="method" value="EM"/>
    <property type="resolution" value="3.90 A"/>
    <property type="chains" value="N=2-204"/>
</dbReference>
<dbReference type="PDB" id="6SGC">
    <property type="method" value="EM"/>
    <property type="resolution" value="2.80 A"/>
    <property type="chains" value="N2=1-204"/>
</dbReference>
<dbReference type="PDB" id="6T59">
    <property type="method" value="EM"/>
    <property type="resolution" value="3.11 A"/>
    <property type="chains" value="N3=1-204"/>
</dbReference>
<dbReference type="PDB" id="6ZVK">
    <property type="method" value="EM"/>
    <property type="resolution" value="3.49 A"/>
    <property type="chains" value="12=2-204"/>
</dbReference>
<dbReference type="PDB" id="7A01">
    <property type="method" value="EM"/>
    <property type="resolution" value="3.60 A"/>
    <property type="chains" value="12=2-204"/>
</dbReference>
<dbReference type="PDB" id="7MDZ">
    <property type="method" value="EM"/>
    <property type="resolution" value="3.20 A"/>
    <property type="chains" value="N=1-204"/>
</dbReference>
<dbReference type="PDB" id="7NFX">
    <property type="method" value="EM"/>
    <property type="resolution" value="3.20 A"/>
    <property type="chains" value="N=1-204"/>
</dbReference>
<dbReference type="PDB" id="7NWG">
    <property type="method" value="EM"/>
    <property type="resolution" value="3.80 A"/>
    <property type="chains" value="N3=2-204"/>
</dbReference>
<dbReference type="PDB" id="7NWH">
    <property type="method" value="EM"/>
    <property type="resolution" value="4.10 A"/>
    <property type="chains" value="N=1-204"/>
</dbReference>
<dbReference type="PDB" id="7NWI">
    <property type="method" value="EM"/>
    <property type="resolution" value="3.13 A"/>
    <property type="chains" value="N=2-204"/>
</dbReference>
<dbReference type="PDB" id="7O7Y">
    <property type="method" value="EM"/>
    <property type="resolution" value="2.20 A"/>
    <property type="chains" value="BN=1-204"/>
</dbReference>
<dbReference type="PDB" id="7O7Z">
    <property type="method" value="EM"/>
    <property type="resolution" value="2.40 A"/>
    <property type="chains" value="BN=1-204"/>
</dbReference>
<dbReference type="PDB" id="7O80">
    <property type="method" value="EM"/>
    <property type="resolution" value="2.90 A"/>
    <property type="chains" value="BN=1-204"/>
</dbReference>
<dbReference type="PDB" id="7O81">
    <property type="method" value="EM"/>
    <property type="resolution" value="3.10 A"/>
    <property type="chains" value="BN=1-204"/>
</dbReference>
<dbReference type="PDB" id="7OBR">
    <property type="method" value="EM"/>
    <property type="resolution" value="2.80 A"/>
    <property type="chains" value="N=1-204"/>
</dbReference>
<dbReference type="PDB" id="7OYD">
    <property type="method" value="EM"/>
    <property type="resolution" value="2.30 A"/>
    <property type="chains" value="N=1-204"/>
</dbReference>
<dbReference type="PDB" id="7QWQ">
    <property type="method" value="EM"/>
    <property type="resolution" value="2.83 A"/>
    <property type="chains" value="N=1-204"/>
</dbReference>
<dbReference type="PDB" id="7QWR">
    <property type="method" value="EM"/>
    <property type="resolution" value="2.90 A"/>
    <property type="chains" value="N=1-204"/>
</dbReference>
<dbReference type="PDB" id="7QWS">
    <property type="method" value="EM"/>
    <property type="resolution" value="3.40 A"/>
    <property type="chains" value="N=1-204"/>
</dbReference>
<dbReference type="PDB" id="7TM3">
    <property type="method" value="EM"/>
    <property type="resolution" value="3.25 A"/>
    <property type="chains" value="N=1-204"/>
</dbReference>
<dbReference type="PDB" id="7TOQ">
    <property type="method" value="EM"/>
    <property type="resolution" value="3.10 A"/>
    <property type="chains" value="AL15=2-204"/>
</dbReference>
<dbReference type="PDB" id="7TOR">
    <property type="method" value="EM"/>
    <property type="resolution" value="2.90 A"/>
    <property type="chains" value="AL15=2-204"/>
</dbReference>
<dbReference type="PDB" id="7TUT">
    <property type="method" value="EM"/>
    <property type="resolution" value="3.88 A"/>
    <property type="chains" value="N=1-204"/>
</dbReference>
<dbReference type="PDB" id="7UCJ">
    <property type="method" value="EM"/>
    <property type="resolution" value="3.10 A"/>
    <property type="chains" value="N=2-204"/>
</dbReference>
<dbReference type="PDB" id="7UCK">
    <property type="method" value="EM"/>
    <property type="resolution" value="2.80 A"/>
    <property type="chains" value="N=2-204"/>
</dbReference>
<dbReference type="PDB" id="7ZJW">
    <property type="method" value="EM"/>
    <property type="resolution" value="2.80 A"/>
    <property type="chains" value="LQ=1-204"/>
</dbReference>
<dbReference type="PDB" id="7ZJX">
    <property type="method" value="EM"/>
    <property type="resolution" value="3.10 A"/>
    <property type="chains" value="LQ=1-204"/>
</dbReference>
<dbReference type="PDB" id="8B5L">
    <property type="method" value="EM"/>
    <property type="resolution" value="2.86 A"/>
    <property type="chains" value="N=2-204"/>
</dbReference>
<dbReference type="PDB" id="8B6C">
    <property type="method" value="EM"/>
    <property type="resolution" value="2.79 A"/>
    <property type="chains" value="N=2-204"/>
</dbReference>
<dbReference type="PDB" id="8BHF">
    <property type="method" value="EM"/>
    <property type="resolution" value="3.10 A"/>
    <property type="chains" value="A1=2-204"/>
</dbReference>
<dbReference type="PDB" id="8BPO">
    <property type="method" value="EM"/>
    <property type="resolution" value="2.80 A"/>
    <property type="chains" value="M2=1-204"/>
</dbReference>
<dbReference type="PDB" id="8BTK">
    <property type="method" value="EM"/>
    <property type="resolution" value="3.50 A"/>
    <property type="chains" value="BN=1-204"/>
</dbReference>
<dbReference type="PDB" id="8P2K">
    <property type="method" value="EM"/>
    <property type="resolution" value="2.90 A"/>
    <property type="chains" value="BN=1-204"/>
</dbReference>
<dbReference type="PDB" id="8RJB">
    <property type="method" value="EM"/>
    <property type="resolution" value="2.69 A"/>
    <property type="chains" value="N=1-204"/>
</dbReference>
<dbReference type="PDB" id="8RJC">
    <property type="method" value="EM"/>
    <property type="resolution" value="2.90 A"/>
    <property type="chains" value="N=1-204"/>
</dbReference>
<dbReference type="PDB" id="8RJD">
    <property type="method" value="EM"/>
    <property type="resolution" value="2.79 A"/>
    <property type="chains" value="N=1-204"/>
</dbReference>
<dbReference type="PDB" id="8SCB">
    <property type="method" value="EM"/>
    <property type="resolution" value="2.50 A"/>
    <property type="chains" value="N=1-204"/>
</dbReference>
<dbReference type="PDB" id="8VFT">
    <property type="method" value="EM"/>
    <property type="resolution" value="3.30 A"/>
    <property type="chains" value="N=1-204"/>
</dbReference>
<dbReference type="PDB" id="9BDL">
    <property type="method" value="EM"/>
    <property type="resolution" value="2.80 A"/>
    <property type="chains" value="AL15=2-204"/>
</dbReference>
<dbReference type="PDB" id="9BDN">
    <property type="method" value="EM"/>
    <property type="resolution" value="3.10 A"/>
    <property type="chains" value="AL15=2-204"/>
</dbReference>
<dbReference type="PDB" id="9BDP">
    <property type="method" value="EM"/>
    <property type="resolution" value="3.70 A"/>
    <property type="chains" value="AL15=2-204"/>
</dbReference>
<dbReference type="PDB" id="9F1B">
    <property type="method" value="EM"/>
    <property type="resolution" value="3.01 A"/>
    <property type="chains" value="BN=1-204"/>
</dbReference>
<dbReference type="PDB" id="9F1C">
    <property type="method" value="EM"/>
    <property type="resolution" value="3.78 A"/>
    <property type="chains" value="BN=1-204"/>
</dbReference>
<dbReference type="PDB" id="9F1D">
    <property type="method" value="EM"/>
    <property type="resolution" value="3.26 A"/>
    <property type="chains" value="BN=1-204"/>
</dbReference>
<dbReference type="PDBsum" id="3JAG"/>
<dbReference type="PDBsum" id="3JAH"/>
<dbReference type="PDBsum" id="3JAI"/>
<dbReference type="PDBsum" id="5LZS"/>
<dbReference type="PDBsum" id="5LZT"/>
<dbReference type="PDBsum" id="5LZU"/>
<dbReference type="PDBsum" id="5LZV"/>
<dbReference type="PDBsum" id="5LZW"/>
<dbReference type="PDBsum" id="5LZX"/>
<dbReference type="PDBsum" id="5LZY"/>
<dbReference type="PDBsum" id="6D90"/>
<dbReference type="PDBsum" id="6D9J"/>
<dbReference type="PDBsum" id="6FTG"/>
<dbReference type="PDBsum" id="6FTI"/>
<dbReference type="PDBsum" id="6FTJ"/>
<dbReference type="PDBsum" id="6GZ3"/>
<dbReference type="PDBsum" id="6HCF"/>
<dbReference type="PDBsum" id="6HCJ"/>
<dbReference type="PDBsum" id="6HCM"/>
<dbReference type="PDBsum" id="6HCQ"/>
<dbReference type="PDBsum" id="6MTB"/>
<dbReference type="PDBsum" id="6MTC"/>
<dbReference type="PDBsum" id="6MTD"/>
<dbReference type="PDBsum" id="6MTE"/>
<dbReference type="PDBsum" id="6P5I"/>
<dbReference type="PDBsum" id="6P5J"/>
<dbReference type="PDBsum" id="6P5K"/>
<dbReference type="PDBsum" id="6P5N"/>
<dbReference type="PDBsum" id="6R5Q"/>
<dbReference type="PDBsum" id="6R6G"/>
<dbReference type="PDBsum" id="6R6P"/>
<dbReference type="PDBsum" id="6R7Q"/>
<dbReference type="PDBsum" id="6SGC"/>
<dbReference type="PDBsum" id="6T59"/>
<dbReference type="PDBsum" id="6ZVK"/>
<dbReference type="PDBsum" id="7A01"/>
<dbReference type="PDBsum" id="7MDZ"/>
<dbReference type="PDBsum" id="7NFX"/>
<dbReference type="PDBsum" id="7NWG"/>
<dbReference type="PDBsum" id="7NWH"/>
<dbReference type="PDBsum" id="7NWI"/>
<dbReference type="PDBsum" id="7O7Y"/>
<dbReference type="PDBsum" id="7O7Z"/>
<dbReference type="PDBsum" id="7O80"/>
<dbReference type="PDBsum" id="7O81"/>
<dbReference type="PDBsum" id="7OBR"/>
<dbReference type="PDBsum" id="7OYD"/>
<dbReference type="PDBsum" id="7QWQ"/>
<dbReference type="PDBsum" id="7QWR"/>
<dbReference type="PDBsum" id="7QWS"/>
<dbReference type="PDBsum" id="7TM3"/>
<dbReference type="PDBsum" id="7TOQ"/>
<dbReference type="PDBsum" id="7TOR"/>
<dbReference type="PDBsum" id="7TUT"/>
<dbReference type="PDBsum" id="7UCJ"/>
<dbReference type="PDBsum" id="7UCK"/>
<dbReference type="PDBsum" id="7ZJW"/>
<dbReference type="PDBsum" id="7ZJX"/>
<dbReference type="PDBsum" id="8B5L"/>
<dbReference type="PDBsum" id="8B6C"/>
<dbReference type="PDBsum" id="8BHF"/>
<dbReference type="PDBsum" id="8BPO"/>
<dbReference type="PDBsum" id="8BTK"/>
<dbReference type="PDBsum" id="8P2K"/>
<dbReference type="PDBsum" id="8RJB"/>
<dbReference type="PDBsum" id="8RJC"/>
<dbReference type="PDBsum" id="8RJD"/>
<dbReference type="PDBsum" id="8SCB"/>
<dbReference type="PDBsum" id="8VFT"/>
<dbReference type="PDBsum" id="9BDL"/>
<dbReference type="PDBsum" id="9BDN"/>
<dbReference type="PDBsum" id="9BDP"/>
<dbReference type="PDBsum" id="9F1B"/>
<dbReference type="PDBsum" id="9F1C"/>
<dbReference type="PDBsum" id="9F1D"/>
<dbReference type="EMDB" id="EMD-0098"/>
<dbReference type="EMDB" id="EMD-0099"/>
<dbReference type="EMDB" id="EMD-0100"/>
<dbReference type="EMDB" id="EMD-0192"/>
<dbReference type="EMDB" id="EMD-0194"/>
<dbReference type="EMDB" id="EMD-0195"/>
<dbReference type="EMDB" id="EMD-0197"/>
<dbReference type="EMDB" id="EMD-10181"/>
<dbReference type="EMDB" id="EMD-10380"/>
<dbReference type="EMDB" id="EMD-11459"/>
<dbReference type="EMDB" id="EMD-11590"/>
<dbReference type="EMDB" id="EMD-12303"/>
<dbReference type="EMDB" id="EMD-12631"/>
<dbReference type="EMDB" id="EMD-12632"/>
<dbReference type="EMDB" id="EMD-12633"/>
<dbReference type="EMDB" id="EMD-12756"/>
<dbReference type="EMDB" id="EMD-12757"/>
<dbReference type="EMDB" id="EMD-12758"/>
<dbReference type="EMDB" id="EMD-12759"/>
<dbReference type="EMDB" id="EMD-12801"/>
<dbReference type="EMDB" id="EMD-13114"/>
<dbReference type="EMDB" id="EMD-14191"/>
<dbReference type="EMDB" id="EMD-14192"/>
<dbReference type="EMDB" id="EMD-14193"/>
<dbReference type="EMDB" id="EMD-14751"/>
<dbReference type="EMDB" id="EMD-14752"/>
<dbReference type="EMDB" id="EMD-15860"/>
<dbReference type="EMDB" id="EMD-15863"/>
<dbReference type="EMDB" id="EMD-16052"/>
<dbReference type="EMDB" id="EMD-16155"/>
<dbReference type="EMDB" id="EMD-16232"/>
<dbReference type="EMDB" id="EMD-17367"/>
<dbReference type="EMDB" id="EMD-19195"/>
<dbReference type="EMDB" id="EMD-19197"/>
<dbReference type="EMDB" id="EMD-19198"/>
<dbReference type="EMDB" id="EMD-20255"/>
<dbReference type="EMDB" id="EMD-20256"/>
<dbReference type="EMDB" id="EMD-20257"/>
<dbReference type="EMDB" id="EMD-20258"/>
<dbReference type="EMDB" id="EMD-23785"/>
<dbReference type="EMDB" id="EMD-25994"/>
<dbReference type="EMDB" id="EMD-26035"/>
<dbReference type="EMDB" id="EMD-26036"/>
<dbReference type="EMDB" id="EMD-26133"/>
<dbReference type="EMDB" id="EMD-26444"/>
<dbReference type="EMDB" id="EMD-26445"/>
<dbReference type="EMDB" id="EMD-40344"/>
<dbReference type="EMDB" id="EMD-4130"/>
<dbReference type="EMDB" id="EMD-4131"/>
<dbReference type="EMDB" id="EMD-4132"/>
<dbReference type="EMDB" id="EMD-4133"/>
<dbReference type="EMDB" id="EMD-4134"/>
<dbReference type="EMDB" id="EMD-4135"/>
<dbReference type="EMDB" id="EMD-4136"/>
<dbReference type="EMDB" id="EMD-4300"/>
<dbReference type="EMDB" id="EMD-4315"/>
<dbReference type="EMDB" id="EMD-4316"/>
<dbReference type="EMDB" id="EMD-4317"/>
<dbReference type="EMDB" id="EMD-43189"/>
<dbReference type="EMDB" id="EMD-44461"/>
<dbReference type="EMDB" id="EMD-44463"/>
<dbReference type="EMDB" id="EMD-44464"/>
<dbReference type="EMDB" id="EMD-4729"/>
<dbReference type="EMDB" id="EMD-4735"/>
<dbReference type="EMDB" id="EMD-4737"/>
<dbReference type="EMDB" id="EMD-4745"/>
<dbReference type="EMDB" id="EMD-50124"/>
<dbReference type="EMDB" id="EMD-50125"/>
<dbReference type="EMDB" id="EMD-50126"/>
<dbReference type="EMDB" id="EMD-7834"/>
<dbReference type="EMDB" id="EMD-7836"/>
<dbReference type="EMDB" id="EMD-9237"/>
<dbReference type="EMDB" id="EMD-9239"/>
<dbReference type="EMDB" id="EMD-9240"/>
<dbReference type="EMDB" id="EMD-9242"/>
<dbReference type="SMR" id="G1T0C1"/>
<dbReference type="IntAct" id="G1T0C1">
    <property type="interactions" value="1"/>
</dbReference>
<dbReference type="PaxDb" id="9986-ENSOCUP00000009428"/>
<dbReference type="Ensembl" id="ENSOCUT00000010959.4">
    <property type="protein sequence ID" value="ENSOCUP00000009428.2"/>
    <property type="gene ID" value="ENSOCUG00000010961.4"/>
</dbReference>
<dbReference type="GeneID" id="100356383"/>
<dbReference type="KEGG" id="ocu:100356383"/>
<dbReference type="KEGG" id="ocu:100358370"/>
<dbReference type="CTD" id="6138"/>
<dbReference type="eggNOG" id="KOG1678">
    <property type="taxonomic scope" value="Eukaryota"/>
</dbReference>
<dbReference type="GeneTree" id="ENSGT00910000144184"/>
<dbReference type="HOGENOM" id="CLU_080796_0_0_1"/>
<dbReference type="OMA" id="YIRDAWK"/>
<dbReference type="OrthoDB" id="10255148at2759"/>
<dbReference type="TreeFam" id="TF300050"/>
<dbReference type="Proteomes" id="UP000001811">
    <property type="component" value="Chromosome 14"/>
</dbReference>
<dbReference type="Bgee" id="ENSOCUG00000010961">
    <property type="expression patterns" value="Expressed in embryo and 14 other cell types or tissues"/>
</dbReference>
<dbReference type="GO" id="GO:0022625">
    <property type="term" value="C:cytosolic large ribosomal subunit"/>
    <property type="evidence" value="ECO:0007669"/>
    <property type="project" value="TreeGrafter"/>
</dbReference>
<dbReference type="GO" id="GO:0003723">
    <property type="term" value="F:RNA binding"/>
    <property type="evidence" value="ECO:0007669"/>
    <property type="project" value="TreeGrafter"/>
</dbReference>
<dbReference type="GO" id="GO:0003735">
    <property type="term" value="F:structural constituent of ribosome"/>
    <property type="evidence" value="ECO:0007669"/>
    <property type="project" value="InterPro"/>
</dbReference>
<dbReference type="GO" id="GO:0002181">
    <property type="term" value="P:cytoplasmic translation"/>
    <property type="evidence" value="ECO:0007669"/>
    <property type="project" value="TreeGrafter"/>
</dbReference>
<dbReference type="FunFam" id="3.40.1120.10:FF:000001">
    <property type="entry name" value="Ribosomal protein L15"/>
    <property type="match status" value="1"/>
</dbReference>
<dbReference type="Gene3D" id="3.40.1120.10">
    <property type="entry name" value="Ribosomal protein l15e"/>
    <property type="match status" value="1"/>
</dbReference>
<dbReference type="InterPro" id="IPR024794">
    <property type="entry name" value="Rbsml_eL15_core_dom_sf"/>
</dbReference>
<dbReference type="InterPro" id="IPR000439">
    <property type="entry name" value="Ribosomal_eL15"/>
</dbReference>
<dbReference type="InterPro" id="IPR020925">
    <property type="entry name" value="Ribosomal_eL15_CS"/>
</dbReference>
<dbReference type="InterPro" id="IPR012678">
    <property type="entry name" value="Ribosomal_uL23/eL15/eS24_sf"/>
</dbReference>
<dbReference type="NCBIfam" id="NF003269">
    <property type="entry name" value="PRK04243.1"/>
    <property type="match status" value="1"/>
</dbReference>
<dbReference type="PANTHER" id="PTHR11847:SF4">
    <property type="entry name" value="LARGE RIBOSOMAL SUBUNIT PROTEIN EL15"/>
    <property type="match status" value="1"/>
</dbReference>
<dbReference type="PANTHER" id="PTHR11847">
    <property type="entry name" value="RIBOSOMAL PROTEIN L15"/>
    <property type="match status" value="1"/>
</dbReference>
<dbReference type="Pfam" id="PF00827">
    <property type="entry name" value="Ribosomal_L15e"/>
    <property type="match status" value="1"/>
</dbReference>
<dbReference type="SMART" id="SM01384">
    <property type="entry name" value="Ribosomal_L15e"/>
    <property type="match status" value="1"/>
</dbReference>
<dbReference type="SUPFAM" id="SSF54189">
    <property type="entry name" value="Ribosomal proteins S24e, L23 and L15e"/>
    <property type="match status" value="1"/>
</dbReference>
<dbReference type="PROSITE" id="PS01194">
    <property type="entry name" value="RIBOSOMAL_L15E"/>
    <property type="match status" value="1"/>
</dbReference>
<evidence type="ECO:0000250" key="1">
    <source>
        <dbReference type="UniProtKB" id="P61313"/>
    </source>
</evidence>
<evidence type="ECO:0000250" key="2">
    <source>
        <dbReference type="UniProtKB" id="P61314"/>
    </source>
</evidence>
<evidence type="ECO:0000256" key="3">
    <source>
        <dbReference type="SAM" id="MobiDB-lite"/>
    </source>
</evidence>
<evidence type="ECO:0000269" key="4">
    <source>
    </source>
</evidence>
<evidence type="ECO:0000269" key="5">
    <source>
    </source>
</evidence>
<evidence type="ECO:0000269" key="6">
    <source>
    </source>
</evidence>
<evidence type="ECO:0000269" key="7">
    <source>
    </source>
</evidence>
<evidence type="ECO:0000269" key="8">
    <source>
    </source>
</evidence>
<evidence type="ECO:0000269" key="9">
    <source>
    </source>
</evidence>
<evidence type="ECO:0000269" key="10">
    <source>
    </source>
</evidence>
<evidence type="ECO:0000269" key="11">
    <source>
    </source>
</evidence>
<evidence type="ECO:0000269" key="12">
    <source>
    </source>
</evidence>
<evidence type="ECO:0000269" key="13">
    <source>
    </source>
</evidence>
<evidence type="ECO:0000269" key="14">
    <source>
    </source>
</evidence>
<evidence type="ECO:0000269" key="15">
    <source>
    </source>
</evidence>
<evidence type="ECO:0000269" key="16">
    <source>
    </source>
</evidence>
<evidence type="ECO:0000305" key="17"/>
<evidence type="ECO:0007744" key="18">
    <source>
        <dbReference type="PDB" id="3JAG"/>
    </source>
</evidence>
<evidence type="ECO:0007744" key="19">
    <source>
        <dbReference type="PDB" id="3JAH"/>
    </source>
</evidence>
<evidence type="ECO:0007744" key="20">
    <source>
        <dbReference type="PDB" id="5LZS"/>
    </source>
</evidence>
<evidence type="ECO:0007744" key="21">
    <source>
        <dbReference type="PDB" id="5LZT"/>
    </source>
</evidence>
<evidence type="ECO:0007744" key="22">
    <source>
        <dbReference type="PDB" id="6D90"/>
    </source>
</evidence>
<evidence type="ECO:0007744" key="23">
    <source>
        <dbReference type="PDB" id="6D9J"/>
    </source>
</evidence>
<evidence type="ECO:0007744" key="24">
    <source>
        <dbReference type="PDB" id="6GZ3"/>
    </source>
</evidence>
<evidence type="ECO:0007744" key="25">
    <source>
        <dbReference type="PDB" id="6HCF"/>
    </source>
</evidence>
<evidence type="ECO:0007744" key="26">
    <source>
        <dbReference type="PDB" id="6HCJ"/>
    </source>
</evidence>
<evidence type="ECO:0007744" key="27">
    <source>
        <dbReference type="PDB" id="6MTB"/>
    </source>
</evidence>
<evidence type="ECO:0007744" key="28">
    <source>
        <dbReference type="PDB" id="6MTC"/>
    </source>
</evidence>
<evidence type="ECO:0007744" key="29">
    <source>
        <dbReference type="PDB" id="6P5I"/>
    </source>
</evidence>
<evidence type="ECO:0007744" key="30">
    <source>
        <dbReference type="PDB" id="6P5J"/>
    </source>
</evidence>
<evidence type="ECO:0007744" key="31">
    <source>
        <dbReference type="PDB" id="6R5Q"/>
    </source>
</evidence>
<evidence type="ECO:0007744" key="32">
    <source>
        <dbReference type="PDB" id="6R6G"/>
    </source>
</evidence>
<evidence type="ECO:0007744" key="33">
    <source>
        <dbReference type="PDB" id="6SGC"/>
    </source>
</evidence>
<evidence type="ECO:0007744" key="34">
    <source>
        <dbReference type="PDB" id="6ZVK"/>
    </source>
</evidence>
<evidence type="ECO:0007744" key="35">
    <source>
        <dbReference type="PDB" id="7A01"/>
    </source>
</evidence>
<evidence type="ECO:0007744" key="36">
    <source>
        <dbReference type="PDB" id="7OYD"/>
    </source>
</evidence>
<evidence type="ECO:0007744" key="37">
    <source>
        <dbReference type="PDB" id="7UCJ"/>
    </source>
</evidence>
<evidence type="ECO:0007744" key="38">
    <source>
        <dbReference type="PDB" id="7UCK"/>
    </source>
</evidence>
<evidence type="ECO:0007744" key="39">
    <source>
        <dbReference type="PDB" id="7ZJW"/>
    </source>
</evidence>
<evidence type="ECO:0007744" key="40">
    <source>
        <dbReference type="PDB" id="7ZJX"/>
    </source>
</evidence>
<keyword id="KW-0002">3D-structure</keyword>
<keyword id="KW-0963">Cytoplasm</keyword>
<keyword id="KW-1017">Isopeptide bond</keyword>
<keyword id="KW-0449">Lipoprotein</keyword>
<keyword id="KW-0519">Myristate</keyword>
<keyword id="KW-0597">Phosphoprotein</keyword>
<keyword id="KW-1185">Reference proteome</keyword>
<keyword id="KW-0687">Ribonucleoprotein</keyword>
<keyword id="KW-0689">Ribosomal protein</keyword>
<keyword id="KW-0832">Ubl conjugation</keyword>
<sequence>MGAYKYIQELWRKKQSDVMRFLLRVRCWQYRQLSALHRAPRPTRPDKARRLGYKAKQGYVIYRIRVRRGGRKRPVPKGATYGKPVHHGVNQLKFARSLQSVAEERAGRHCGALRVLNSYWVGEDSTYKFFEVILIDPFHKAIRRNPDTQWITKPVHKHREMRGLTSAGRKSRGLGKGHKFHHTIGGSRRAAWRRRNTLQLHRYR</sequence>
<proteinExistence type="evidence at protein level"/>
<name>RL15_RABIT</name>
<accession>G1T0C1</accession>
<gene>
    <name type="primary">RPL15</name>
</gene>
<feature type="initiator methionine" description="Removed" evidence="1">
    <location>
        <position position="1"/>
    </location>
</feature>
<feature type="chain" id="PRO_0000460104" description="Large ribosomal subunit protein eL15">
    <location>
        <begin position="2"/>
        <end position="204"/>
    </location>
</feature>
<feature type="region of interest" description="Disordered" evidence="3">
    <location>
        <begin position="165"/>
        <end position="186"/>
    </location>
</feature>
<feature type="compositionally biased region" description="Basic residues" evidence="3">
    <location>
        <begin position="169"/>
        <end position="182"/>
    </location>
</feature>
<feature type="modified residue" description="Phosphoserine" evidence="2">
    <location>
        <position position="34"/>
    </location>
</feature>
<feature type="modified residue" description="Phosphoserine" evidence="1">
    <location>
        <position position="97"/>
    </location>
</feature>
<feature type="modified residue" description="Phosphoserine" evidence="1">
    <location>
        <position position="100"/>
    </location>
</feature>
<feature type="lipid moiety-binding region" description="N-myristoyl glycine" evidence="1">
    <location>
        <position position="2"/>
    </location>
</feature>
<feature type="cross-link" description="Glycyl lysine isopeptide (Lys-Gly) (interchain with G-Cter in SUMO2)" evidence="1">
    <location>
        <position position="83"/>
    </location>
</feature>